<name>RL22_LYSSC</name>
<keyword id="KW-0687">Ribonucleoprotein</keyword>
<keyword id="KW-0689">Ribosomal protein</keyword>
<keyword id="KW-0694">RNA-binding</keyword>
<keyword id="KW-0699">rRNA-binding</keyword>
<proteinExistence type="inferred from homology"/>
<protein>
    <recommendedName>
        <fullName evidence="1">Large ribosomal subunit protein uL22</fullName>
    </recommendedName>
    <alternativeName>
        <fullName evidence="2">50S ribosomal protein L22</fullName>
    </alternativeName>
</protein>
<evidence type="ECO:0000255" key="1">
    <source>
        <dbReference type="HAMAP-Rule" id="MF_01331"/>
    </source>
</evidence>
<evidence type="ECO:0000305" key="2"/>
<comment type="function">
    <text evidence="1">This protein binds specifically to 23S rRNA; its binding is stimulated by other ribosomal proteins, e.g. L4, L17, and L20. It is important during the early stages of 50S assembly. It makes multiple contacts with different domains of the 23S rRNA in the assembled 50S subunit and ribosome (By similarity).</text>
</comment>
<comment type="function">
    <text evidence="1">The globular domain of the protein is located near the polypeptide exit tunnel on the outside of the subunit, while an extended beta-hairpin is found that lines the wall of the exit tunnel in the center of the 70S ribosome.</text>
</comment>
<comment type="subunit">
    <text evidence="1">Part of the 50S ribosomal subunit.</text>
</comment>
<comment type="similarity">
    <text evidence="1">Belongs to the universal ribosomal protein uL22 family.</text>
</comment>
<feature type="chain" id="PRO_0000354483" description="Large ribosomal subunit protein uL22">
    <location>
        <begin position="1"/>
        <end position="114"/>
    </location>
</feature>
<sequence>MTQAKAIARTVRIAPRKVRLVVDLIRGKQVGEAVAILRHTPKAASPVVEKVLKSAVANAEHNYDLDINSLVVSEVFVDEGPTLKRFRPRAQGRASAINKRTSHITLVVSEKKEG</sequence>
<accession>B1HMX5</accession>
<gene>
    <name evidence="1" type="primary">rplV</name>
    <name type="ordered locus">Bsph_4609</name>
</gene>
<reference key="1">
    <citation type="journal article" date="2008" name="J. Bacteriol.">
        <title>Complete genome sequence of the mosquitocidal bacterium Bacillus sphaericus C3-41 and comparison with those of closely related Bacillus species.</title>
        <authorList>
            <person name="Hu X."/>
            <person name="Fan W."/>
            <person name="Han B."/>
            <person name="Liu H."/>
            <person name="Zheng D."/>
            <person name="Li Q."/>
            <person name="Dong W."/>
            <person name="Yan J."/>
            <person name="Gao M."/>
            <person name="Berry C."/>
            <person name="Yuan Z."/>
        </authorList>
    </citation>
    <scope>NUCLEOTIDE SEQUENCE [LARGE SCALE GENOMIC DNA]</scope>
    <source>
        <strain>C3-41</strain>
    </source>
</reference>
<organism>
    <name type="scientific">Lysinibacillus sphaericus (strain C3-41)</name>
    <dbReference type="NCBI Taxonomy" id="444177"/>
    <lineage>
        <taxon>Bacteria</taxon>
        <taxon>Bacillati</taxon>
        <taxon>Bacillota</taxon>
        <taxon>Bacilli</taxon>
        <taxon>Bacillales</taxon>
        <taxon>Bacillaceae</taxon>
        <taxon>Lysinibacillus</taxon>
    </lineage>
</organism>
<dbReference type="EMBL" id="CP000817">
    <property type="protein sequence ID" value="ACA42053.1"/>
    <property type="molecule type" value="Genomic_DNA"/>
</dbReference>
<dbReference type="RefSeq" id="WP_004233639.1">
    <property type="nucleotide sequence ID" value="NC_010382.1"/>
</dbReference>
<dbReference type="SMR" id="B1HMX5"/>
<dbReference type="EnsemblBacteria" id="ACA42053">
    <property type="protein sequence ID" value="ACA42053"/>
    <property type="gene ID" value="Bsph_4609"/>
</dbReference>
<dbReference type="GeneID" id="96596894"/>
<dbReference type="KEGG" id="lsp:Bsph_4609"/>
<dbReference type="HOGENOM" id="CLU_083987_3_3_9"/>
<dbReference type="Proteomes" id="UP000002164">
    <property type="component" value="Chromosome"/>
</dbReference>
<dbReference type="GO" id="GO:0022625">
    <property type="term" value="C:cytosolic large ribosomal subunit"/>
    <property type="evidence" value="ECO:0007669"/>
    <property type="project" value="TreeGrafter"/>
</dbReference>
<dbReference type="GO" id="GO:0019843">
    <property type="term" value="F:rRNA binding"/>
    <property type="evidence" value="ECO:0007669"/>
    <property type="project" value="UniProtKB-UniRule"/>
</dbReference>
<dbReference type="GO" id="GO:0003735">
    <property type="term" value="F:structural constituent of ribosome"/>
    <property type="evidence" value="ECO:0007669"/>
    <property type="project" value="InterPro"/>
</dbReference>
<dbReference type="GO" id="GO:0006412">
    <property type="term" value="P:translation"/>
    <property type="evidence" value="ECO:0007669"/>
    <property type="project" value="UniProtKB-UniRule"/>
</dbReference>
<dbReference type="CDD" id="cd00336">
    <property type="entry name" value="Ribosomal_L22"/>
    <property type="match status" value="1"/>
</dbReference>
<dbReference type="FunFam" id="3.90.470.10:FF:000001">
    <property type="entry name" value="50S ribosomal protein L22"/>
    <property type="match status" value="1"/>
</dbReference>
<dbReference type="Gene3D" id="3.90.470.10">
    <property type="entry name" value="Ribosomal protein L22/L17"/>
    <property type="match status" value="1"/>
</dbReference>
<dbReference type="HAMAP" id="MF_01331_B">
    <property type="entry name" value="Ribosomal_uL22_B"/>
    <property type="match status" value="1"/>
</dbReference>
<dbReference type="InterPro" id="IPR001063">
    <property type="entry name" value="Ribosomal_uL22"/>
</dbReference>
<dbReference type="InterPro" id="IPR005727">
    <property type="entry name" value="Ribosomal_uL22_bac/chlpt-type"/>
</dbReference>
<dbReference type="InterPro" id="IPR047867">
    <property type="entry name" value="Ribosomal_uL22_bac/org-type"/>
</dbReference>
<dbReference type="InterPro" id="IPR018260">
    <property type="entry name" value="Ribosomal_uL22_CS"/>
</dbReference>
<dbReference type="InterPro" id="IPR036394">
    <property type="entry name" value="Ribosomal_uL22_sf"/>
</dbReference>
<dbReference type="NCBIfam" id="TIGR01044">
    <property type="entry name" value="rplV_bact"/>
    <property type="match status" value="1"/>
</dbReference>
<dbReference type="PANTHER" id="PTHR13501">
    <property type="entry name" value="CHLOROPLAST 50S RIBOSOMAL PROTEIN L22-RELATED"/>
    <property type="match status" value="1"/>
</dbReference>
<dbReference type="PANTHER" id="PTHR13501:SF8">
    <property type="entry name" value="LARGE RIBOSOMAL SUBUNIT PROTEIN UL22M"/>
    <property type="match status" value="1"/>
</dbReference>
<dbReference type="Pfam" id="PF00237">
    <property type="entry name" value="Ribosomal_L22"/>
    <property type="match status" value="1"/>
</dbReference>
<dbReference type="SUPFAM" id="SSF54843">
    <property type="entry name" value="Ribosomal protein L22"/>
    <property type="match status" value="1"/>
</dbReference>
<dbReference type="PROSITE" id="PS00464">
    <property type="entry name" value="RIBOSOMAL_L22"/>
    <property type="match status" value="1"/>
</dbReference>